<feature type="chain" id="PRO_1000076238" description="Thymidine kinase">
    <location>
        <begin position="1"/>
        <end position="193"/>
    </location>
</feature>
<feature type="active site" description="Proton acceptor" evidence="1">
    <location>
        <position position="88"/>
    </location>
</feature>
<feature type="binding site" evidence="1">
    <location>
        <begin position="15"/>
        <end position="22"/>
    </location>
    <ligand>
        <name>ATP</name>
        <dbReference type="ChEBI" id="CHEBI:30616"/>
    </ligand>
</feature>
<feature type="binding site" evidence="1">
    <location>
        <begin position="87"/>
        <end position="90"/>
    </location>
    <ligand>
        <name>ATP</name>
        <dbReference type="ChEBI" id="CHEBI:30616"/>
    </ligand>
</feature>
<feature type="binding site" evidence="1">
    <location>
        <position position="147"/>
    </location>
    <ligand>
        <name>Zn(2+)</name>
        <dbReference type="ChEBI" id="CHEBI:29105"/>
    </ligand>
</feature>
<feature type="binding site" evidence="1">
    <location>
        <position position="150"/>
    </location>
    <ligand>
        <name>Zn(2+)</name>
        <dbReference type="ChEBI" id="CHEBI:29105"/>
    </ligand>
</feature>
<feature type="binding site" evidence="1">
    <location>
        <position position="185"/>
    </location>
    <ligand>
        <name>Zn(2+)</name>
        <dbReference type="ChEBI" id="CHEBI:29105"/>
    </ligand>
</feature>
<feature type="binding site" evidence="1">
    <location>
        <position position="188"/>
    </location>
    <ligand>
        <name>Zn(2+)</name>
        <dbReference type="ChEBI" id="CHEBI:29105"/>
    </ligand>
</feature>
<comment type="catalytic activity">
    <reaction evidence="1">
        <text>thymidine + ATP = dTMP + ADP + H(+)</text>
        <dbReference type="Rhea" id="RHEA:19129"/>
        <dbReference type="ChEBI" id="CHEBI:15378"/>
        <dbReference type="ChEBI" id="CHEBI:17748"/>
        <dbReference type="ChEBI" id="CHEBI:30616"/>
        <dbReference type="ChEBI" id="CHEBI:63528"/>
        <dbReference type="ChEBI" id="CHEBI:456216"/>
        <dbReference type="EC" id="2.7.1.21"/>
    </reaction>
</comment>
<comment type="subunit">
    <text evidence="1">Homotetramer.</text>
</comment>
<comment type="subcellular location">
    <subcellularLocation>
        <location evidence="1">Cytoplasm</location>
    </subcellularLocation>
</comment>
<comment type="similarity">
    <text evidence="1">Belongs to the thymidine kinase family.</text>
</comment>
<organism>
    <name type="scientific">Chloroflexus aurantiacus (strain ATCC 29366 / DSM 635 / J-10-fl)</name>
    <dbReference type="NCBI Taxonomy" id="324602"/>
    <lineage>
        <taxon>Bacteria</taxon>
        <taxon>Bacillati</taxon>
        <taxon>Chloroflexota</taxon>
        <taxon>Chloroflexia</taxon>
        <taxon>Chloroflexales</taxon>
        <taxon>Chloroflexineae</taxon>
        <taxon>Chloroflexaceae</taxon>
        <taxon>Chloroflexus</taxon>
    </lineage>
</organism>
<evidence type="ECO:0000255" key="1">
    <source>
        <dbReference type="HAMAP-Rule" id="MF_00124"/>
    </source>
</evidence>
<protein>
    <recommendedName>
        <fullName evidence="1">Thymidine kinase</fullName>
        <ecNumber evidence="1">2.7.1.21</ecNumber>
    </recommendedName>
</protein>
<sequence>MTRPSDGGRIEVICGCMYSGKTEELIRRMRQVRIARQSYRIFTPRMDTRYAEGQVASHSGSRLEAITVATMKDILAHAEDAQVVAIDELHLFDDDPAEMVRGCQWLANRGVRVIVAGLDLNYRAEPFPAMMHLLALAEQVDKLYAICVKCGAYATRSQRLIDGKPAPADAPTIVVGGLDMYEARCRTCYEPAV</sequence>
<reference key="1">
    <citation type="journal article" date="2011" name="BMC Genomics">
        <title>Complete genome sequence of the filamentous anoxygenic phototrophic bacterium Chloroflexus aurantiacus.</title>
        <authorList>
            <person name="Tang K.H."/>
            <person name="Barry K."/>
            <person name="Chertkov O."/>
            <person name="Dalin E."/>
            <person name="Han C.S."/>
            <person name="Hauser L.J."/>
            <person name="Honchak B.M."/>
            <person name="Karbach L.E."/>
            <person name="Land M.L."/>
            <person name="Lapidus A."/>
            <person name="Larimer F.W."/>
            <person name="Mikhailova N."/>
            <person name="Pitluck S."/>
            <person name="Pierson B.K."/>
            <person name="Blankenship R.E."/>
        </authorList>
    </citation>
    <scope>NUCLEOTIDE SEQUENCE [LARGE SCALE GENOMIC DNA]</scope>
    <source>
        <strain>ATCC 29366 / DSM 635 / J-10-fl</strain>
    </source>
</reference>
<name>KITH_CHLAA</name>
<keyword id="KW-0067">ATP-binding</keyword>
<keyword id="KW-0963">Cytoplasm</keyword>
<keyword id="KW-0237">DNA synthesis</keyword>
<keyword id="KW-0418">Kinase</keyword>
<keyword id="KW-0479">Metal-binding</keyword>
<keyword id="KW-0547">Nucleotide-binding</keyword>
<keyword id="KW-1185">Reference proteome</keyword>
<keyword id="KW-0808">Transferase</keyword>
<keyword id="KW-0862">Zinc</keyword>
<dbReference type="EC" id="2.7.1.21" evidence="1"/>
<dbReference type="EMBL" id="CP000909">
    <property type="protein sequence ID" value="ABY35518.1"/>
    <property type="molecule type" value="Genomic_DNA"/>
</dbReference>
<dbReference type="RefSeq" id="WP_012258172.1">
    <property type="nucleotide sequence ID" value="NC_010175.1"/>
</dbReference>
<dbReference type="RefSeq" id="YP_001635907.1">
    <property type="nucleotide sequence ID" value="NC_010175.1"/>
</dbReference>
<dbReference type="SMR" id="A9WGI6"/>
<dbReference type="FunCoup" id="A9WGI6">
    <property type="interactions" value="212"/>
</dbReference>
<dbReference type="STRING" id="324602.Caur_2309"/>
<dbReference type="EnsemblBacteria" id="ABY35518">
    <property type="protein sequence ID" value="ABY35518"/>
    <property type="gene ID" value="Caur_2309"/>
</dbReference>
<dbReference type="KEGG" id="cau:Caur_2309"/>
<dbReference type="PATRIC" id="fig|324602.8.peg.2615"/>
<dbReference type="eggNOG" id="COG1435">
    <property type="taxonomic scope" value="Bacteria"/>
</dbReference>
<dbReference type="HOGENOM" id="CLU_064400_3_0_0"/>
<dbReference type="InParanoid" id="A9WGI6"/>
<dbReference type="Proteomes" id="UP000002008">
    <property type="component" value="Chromosome"/>
</dbReference>
<dbReference type="GO" id="GO:0005829">
    <property type="term" value="C:cytosol"/>
    <property type="evidence" value="ECO:0000318"/>
    <property type="project" value="GO_Central"/>
</dbReference>
<dbReference type="GO" id="GO:0005524">
    <property type="term" value="F:ATP binding"/>
    <property type="evidence" value="ECO:0007669"/>
    <property type="project" value="UniProtKB-UniRule"/>
</dbReference>
<dbReference type="GO" id="GO:0004797">
    <property type="term" value="F:thymidine kinase activity"/>
    <property type="evidence" value="ECO:0000318"/>
    <property type="project" value="GO_Central"/>
</dbReference>
<dbReference type="GO" id="GO:0008270">
    <property type="term" value="F:zinc ion binding"/>
    <property type="evidence" value="ECO:0007669"/>
    <property type="project" value="UniProtKB-UniRule"/>
</dbReference>
<dbReference type="GO" id="GO:0071897">
    <property type="term" value="P:DNA biosynthetic process"/>
    <property type="evidence" value="ECO:0007669"/>
    <property type="project" value="UniProtKB-KW"/>
</dbReference>
<dbReference type="GO" id="GO:0046104">
    <property type="term" value="P:thymidine metabolic process"/>
    <property type="evidence" value="ECO:0000318"/>
    <property type="project" value="GO_Central"/>
</dbReference>
<dbReference type="FunFam" id="3.40.50.300:FF:004135">
    <property type="entry name" value="Thymidine kinase"/>
    <property type="match status" value="1"/>
</dbReference>
<dbReference type="Gene3D" id="3.30.60.20">
    <property type="match status" value="1"/>
</dbReference>
<dbReference type="Gene3D" id="3.40.50.300">
    <property type="entry name" value="P-loop containing nucleotide triphosphate hydrolases"/>
    <property type="match status" value="1"/>
</dbReference>
<dbReference type="HAMAP" id="MF_00124">
    <property type="entry name" value="Thymidine_kinase"/>
    <property type="match status" value="1"/>
</dbReference>
<dbReference type="InterPro" id="IPR027417">
    <property type="entry name" value="P-loop_NTPase"/>
</dbReference>
<dbReference type="InterPro" id="IPR001267">
    <property type="entry name" value="Thymidine_kinase"/>
</dbReference>
<dbReference type="InterPro" id="IPR020633">
    <property type="entry name" value="Thymidine_kinase_CS"/>
</dbReference>
<dbReference type="NCBIfam" id="NF003296">
    <property type="entry name" value="PRK04296.1-1"/>
    <property type="match status" value="1"/>
</dbReference>
<dbReference type="PANTHER" id="PTHR11441">
    <property type="entry name" value="THYMIDINE KINASE"/>
    <property type="match status" value="1"/>
</dbReference>
<dbReference type="PANTHER" id="PTHR11441:SF0">
    <property type="entry name" value="THYMIDINE KINASE, CYTOSOLIC"/>
    <property type="match status" value="1"/>
</dbReference>
<dbReference type="Pfam" id="PF00265">
    <property type="entry name" value="TK"/>
    <property type="match status" value="1"/>
</dbReference>
<dbReference type="PIRSF" id="PIRSF035805">
    <property type="entry name" value="TK_cell"/>
    <property type="match status" value="1"/>
</dbReference>
<dbReference type="SUPFAM" id="SSF57716">
    <property type="entry name" value="Glucocorticoid receptor-like (DNA-binding domain)"/>
    <property type="match status" value="1"/>
</dbReference>
<dbReference type="SUPFAM" id="SSF52540">
    <property type="entry name" value="P-loop containing nucleoside triphosphate hydrolases"/>
    <property type="match status" value="1"/>
</dbReference>
<dbReference type="PROSITE" id="PS00603">
    <property type="entry name" value="TK_CELLULAR_TYPE"/>
    <property type="match status" value="1"/>
</dbReference>
<gene>
    <name evidence="1" type="primary">tdk</name>
    <name type="ordered locus">Caur_2309</name>
</gene>
<proteinExistence type="inferred from homology"/>
<accession>A9WGI6</accession>